<name>RL30_CHLPB</name>
<evidence type="ECO:0000255" key="1">
    <source>
        <dbReference type="HAMAP-Rule" id="MF_01371"/>
    </source>
</evidence>
<evidence type="ECO:0000305" key="2"/>
<keyword id="KW-0687">Ribonucleoprotein</keyword>
<keyword id="KW-0689">Ribosomal protein</keyword>
<dbReference type="EMBL" id="CP001101">
    <property type="protein sequence ID" value="ACE05182.1"/>
    <property type="molecule type" value="Genomic_DNA"/>
</dbReference>
<dbReference type="SMR" id="B3EP43"/>
<dbReference type="STRING" id="331678.Cphamn1_2278"/>
<dbReference type="KEGG" id="cpb:Cphamn1_2278"/>
<dbReference type="eggNOG" id="COG1841">
    <property type="taxonomic scope" value="Bacteria"/>
</dbReference>
<dbReference type="HOGENOM" id="CLU_131047_2_0_10"/>
<dbReference type="OrthoDB" id="9812790at2"/>
<dbReference type="GO" id="GO:0022625">
    <property type="term" value="C:cytosolic large ribosomal subunit"/>
    <property type="evidence" value="ECO:0007669"/>
    <property type="project" value="TreeGrafter"/>
</dbReference>
<dbReference type="GO" id="GO:0003735">
    <property type="term" value="F:structural constituent of ribosome"/>
    <property type="evidence" value="ECO:0007669"/>
    <property type="project" value="InterPro"/>
</dbReference>
<dbReference type="GO" id="GO:0006412">
    <property type="term" value="P:translation"/>
    <property type="evidence" value="ECO:0007669"/>
    <property type="project" value="UniProtKB-UniRule"/>
</dbReference>
<dbReference type="CDD" id="cd01658">
    <property type="entry name" value="Ribosomal_L30"/>
    <property type="match status" value="1"/>
</dbReference>
<dbReference type="FunFam" id="3.30.1390.20:FF:000001">
    <property type="entry name" value="50S ribosomal protein L30"/>
    <property type="match status" value="1"/>
</dbReference>
<dbReference type="Gene3D" id="3.30.1390.20">
    <property type="entry name" value="Ribosomal protein L30, ferredoxin-like fold domain"/>
    <property type="match status" value="1"/>
</dbReference>
<dbReference type="HAMAP" id="MF_01371_B">
    <property type="entry name" value="Ribosomal_uL30_B"/>
    <property type="match status" value="1"/>
</dbReference>
<dbReference type="InterPro" id="IPR036919">
    <property type="entry name" value="Ribo_uL30_ferredoxin-like_sf"/>
</dbReference>
<dbReference type="InterPro" id="IPR005996">
    <property type="entry name" value="Ribosomal_uL30_bac-type"/>
</dbReference>
<dbReference type="InterPro" id="IPR016082">
    <property type="entry name" value="Ribosomal_uL30_ferredoxin-like"/>
</dbReference>
<dbReference type="NCBIfam" id="TIGR01308">
    <property type="entry name" value="rpmD_bact"/>
    <property type="match status" value="1"/>
</dbReference>
<dbReference type="PANTHER" id="PTHR15892:SF2">
    <property type="entry name" value="LARGE RIBOSOMAL SUBUNIT PROTEIN UL30M"/>
    <property type="match status" value="1"/>
</dbReference>
<dbReference type="PANTHER" id="PTHR15892">
    <property type="entry name" value="MITOCHONDRIAL RIBOSOMAL PROTEIN L30"/>
    <property type="match status" value="1"/>
</dbReference>
<dbReference type="Pfam" id="PF00327">
    <property type="entry name" value="Ribosomal_L30"/>
    <property type="match status" value="1"/>
</dbReference>
<dbReference type="PIRSF" id="PIRSF002211">
    <property type="entry name" value="Ribosomal_L30_bac-type"/>
    <property type="match status" value="1"/>
</dbReference>
<dbReference type="SUPFAM" id="SSF55129">
    <property type="entry name" value="Ribosomal protein L30p/L7e"/>
    <property type="match status" value="1"/>
</dbReference>
<gene>
    <name evidence="1" type="primary">rpmD</name>
    <name type="ordered locus">Cphamn1_2278</name>
</gene>
<sequence>MSDKKVTITQVRSMIGCTKKQKATIKALGLRRPNNKVEKPDNPCTRGQIRVVQHLVKVEEQ</sequence>
<organism>
    <name type="scientific">Chlorobium phaeobacteroides (strain BS1)</name>
    <dbReference type="NCBI Taxonomy" id="331678"/>
    <lineage>
        <taxon>Bacteria</taxon>
        <taxon>Pseudomonadati</taxon>
        <taxon>Chlorobiota</taxon>
        <taxon>Chlorobiia</taxon>
        <taxon>Chlorobiales</taxon>
        <taxon>Chlorobiaceae</taxon>
        <taxon>Chlorobium/Pelodictyon group</taxon>
        <taxon>Chlorobium</taxon>
    </lineage>
</organism>
<reference key="1">
    <citation type="submission" date="2008-06" db="EMBL/GenBank/DDBJ databases">
        <title>Complete sequence of Chlorobium phaeobacteroides BS1.</title>
        <authorList>
            <consortium name="US DOE Joint Genome Institute"/>
            <person name="Lucas S."/>
            <person name="Copeland A."/>
            <person name="Lapidus A."/>
            <person name="Glavina del Rio T."/>
            <person name="Dalin E."/>
            <person name="Tice H."/>
            <person name="Bruce D."/>
            <person name="Goodwin L."/>
            <person name="Pitluck S."/>
            <person name="Schmutz J."/>
            <person name="Larimer F."/>
            <person name="Land M."/>
            <person name="Hauser L."/>
            <person name="Kyrpides N."/>
            <person name="Ovchinnikova G."/>
            <person name="Li T."/>
            <person name="Liu Z."/>
            <person name="Zhao F."/>
            <person name="Overmann J."/>
            <person name="Bryant D.A."/>
            <person name="Richardson P."/>
        </authorList>
    </citation>
    <scope>NUCLEOTIDE SEQUENCE [LARGE SCALE GENOMIC DNA]</scope>
    <source>
        <strain>BS1</strain>
    </source>
</reference>
<accession>B3EP43</accession>
<proteinExistence type="inferred from homology"/>
<feature type="chain" id="PRO_1000144662" description="Large ribosomal subunit protein uL30">
    <location>
        <begin position="1"/>
        <end position="61"/>
    </location>
</feature>
<protein>
    <recommendedName>
        <fullName evidence="1">Large ribosomal subunit protein uL30</fullName>
    </recommendedName>
    <alternativeName>
        <fullName evidence="2">50S ribosomal protein L30</fullName>
    </alternativeName>
</protein>
<comment type="subunit">
    <text evidence="1">Part of the 50S ribosomal subunit.</text>
</comment>
<comment type="similarity">
    <text evidence="1">Belongs to the universal ribosomal protein uL30 family.</text>
</comment>